<accession>P0A5B2</accession>
<accession>A0A1R3Y095</accession>
<accession>O33257</accession>
<accession>X2BJR8</accession>
<reference key="1">
    <citation type="journal article" date="2003" name="Proc. Natl. Acad. Sci. U.S.A.">
        <title>The complete genome sequence of Mycobacterium bovis.</title>
        <authorList>
            <person name="Garnier T."/>
            <person name="Eiglmeier K."/>
            <person name="Camus J.-C."/>
            <person name="Medina N."/>
            <person name="Mansoor H."/>
            <person name="Pryor M."/>
            <person name="Duthoy S."/>
            <person name="Grondin S."/>
            <person name="Lacroix C."/>
            <person name="Monsempe C."/>
            <person name="Simon S."/>
            <person name="Harris B."/>
            <person name="Atkin R."/>
            <person name="Doggett J."/>
            <person name="Mayes R."/>
            <person name="Keating L."/>
            <person name="Wheeler P.R."/>
            <person name="Parkhill J."/>
            <person name="Barrell B.G."/>
            <person name="Cole S.T."/>
            <person name="Gordon S.V."/>
            <person name="Hewinson R.G."/>
        </authorList>
    </citation>
    <scope>NUCLEOTIDE SEQUENCE [LARGE SCALE GENOMIC DNA]</scope>
    <source>
        <strain>ATCC BAA-935 / AF2122/97</strain>
    </source>
</reference>
<reference key="2">
    <citation type="journal article" date="2017" name="Genome Announc.">
        <title>Updated reference genome sequence and annotation of Mycobacterium bovis AF2122/97.</title>
        <authorList>
            <person name="Malone K.M."/>
            <person name="Farrell D."/>
            <person name="Stuber T.P."/>
            <person name="Schubert O.T."/>
            <person name="Aebersold R."/>
            <person name="Robbe-Austerman S."/>
            <person name="Gordon S.V."/>
        </authorList>
    </citation>
    <scope>NUCLEOTIDE SEQUENCE [LARGE SCALE GENOMIC DNA]</scope>
    <scope>GENOME REANNOTATION</scope>
    <source>
        <strain>ATCC BAA-935 / AF2122/97</strain>
    </source>
</reference>
<feature type="chain" id="PRO_0000136372" description="Phosphoribosyl-ATP pyrophosphatase">
    <location>
        <begin position="1"/>
        <end position="93"/>
    </location>
</feature>
<keyword id="KW-0028">Amino-acid biosynthesis</keyword>
<keyword id="KW-0067">ATP-binding</keyword>
<keyword id="KW-0963">Cytoplasm</keyword>
<keyword id="KW-0368">Histidine biosynthesis</keyword>
<keyword id="KW-0378">Hydrolase</keyword>
<keyword id="KW-0547">Nucleotide-binding</keyword>
<keyword id="KW-1185">Reference proteome</keyword>
<comment type="catalytic activity">
    <reaction>
        <text>1-(5-phospho-beta-D-ribosyl)-ATP + H2O = 1-(5-phospho-beta-D-ribosyl)-5'-AMP + diphosphate + H(+)</text>
        <dbReference type="Rhea" id="RHEA:22828"/>
        <dbReference type="ChEBI" id="CHEBI:15377"/>
        <dbReference type="ChEBI" id="CHEBI:15378"/>
        <dbReference type="ChEBI" id="CHEBI:33019"/>
        <dbReference type="ChEBI" id="CHEBI:59457"/>
        <dbReference type="ChEBI" id="CHEBI:73183"/>
        <dbReference type="EC" id="3.6.1.31"/>
    </reaction>
</comment>
<comment type="pathway">
    <text>Amino-acid biosynthesis; L-histidine biosynthesis; L-histidine from 5-phospho-alpha-D-ribose 1-diphosphate: step 2/9.</text>
</comment>
<comment type="subcellular location">
    <subcellularLocation>
        <location evidence="1">Cytoplasm</location>
    </subcellularLocation>
</comment>
<comment type="similarity">
    <text evidence="2">Belongs to the PRA-PH family.</text>
</comment>
<organism>
    <name type="scientific">Mycobacterium bovis (strain ATCC BAA-935 / AF2122/97)</name>
    <dbReference type="NCBI Taxonomy" id="233413"/>
    <lineage>
        <taxon>Bacteria</taxon>
        <taxon>Bacillati</taxon>
        <taxon>Actinomycetota</taxon>
        <taxon>Actinomycetes</taxon>
        <taxon>Mycobacteriales</taxon>
        <taxon>Mycobacteriaceae</taxon>
        <taxon>Mycobacterium</taxon>
        <taxon>Mycobacterium tuberculosis complex</taxon>
    </lineage>
</organism>
<name>HIS2_MYCBO</name>
<protein>
    <recommendedName>
        <fullName>Phosphoribosyl-ATP pyrophosphatase</fullName>
        <shortName>PRA-PH</shortName>
        <ecNumber>3.6.1.31</ecNumber>
    </recommendedName>
</protein>
<gene>
    <name type="primary">hisE</name>
    <name type="ordered locus">BQ2027_MB2146C</name>
</gene>
<evidence type="ECO:0000250" key="1"/>
<evidence type="ECO:0000305" key="2"/>
<dbReference type="EC" id="3.6.1.31"/>
<dbReference type="EMBL" id="LT708304">
    <property type="protein sequence ID" value="SIU00753.1"/>
    <property type="molecule type" value="Genomic_DNA"/>
</dbReference>
<dbReference type="RefSeq" id="NP_855795.1">
    <property type="nucleotide sequence ID" value="NC_002945.3"/>
</dbReference>
<dbReference type="RefSeq" id="WP_003899180.1">
    <property type="nucleotide sequence ID" value="NC_002945.4"/>
</dbReference>
<dbReference type="SMR" id="P0A5B2"/>
<dbReference type="KEGG" id="mbo:BQ2027_MB2146C"/>
<dbReference type="PATRIC" id="fig|233413.5.peg.2359"/>
<dbReference type="UniPathway" id="UPA00031">
    <property type="reaction ID" value="UER00007"/>
</dbReference>
<dbReference type="Proteomes" id="UP000001419">
    <property type="component" value="Chromosome"/>
</dbReference>
<dbReference type="GO" id="GO:0005737">
    <property type="term" value="C:cytoplasm"/>
    <property type="evidence" value="ECO:0007669"/>
    <property type="project" value="UniProtKB-SubCell"/>
</dbReference>
<dbReference type="GO" id="GO:0005524">
    <property type="term" value="F:ATP binding"/>
    <property type="evidence" value="ECO:0007669"/>
    <property type="project" value="UniProtKB-KW"/>
</dbReference>
<dbReference type="GO" id="GO:0004636">
    <property type="term" value="F:phosphoribosyl-ATP diphosphatase activity"/>
    <property type="evidence" value="ECO:0007669"/>
    <property type="project" value="UniProtKB-UniRule"/>
</dbReference>
<dbReference type="GO" id="GO:0000105">
    <property type="term" value="P:L-histidine biosynthetic process"/>
    <property type="evidence" value="ECO:0007669"/>
    <property type="project" value="UniProtKB-UniRule"/>
</dbReference>
<dbReference type="CDD" id="cd11547">
    <property type="entry name" value="NTP-PPase_HisE"/>
    <property type="match status" value="1"/>
</dbReference>
<dbReference type="FunFam" id="1.10.287.1080:FF:000005">
    <property type="entry name" value="Phosphoribosyl-ATP pyrophosphatase"/>
    <property type="match status" value="1"/>
</dbReference>
<dbReference type="Gene3D" id="1.10.287.1080">
    <property type="entry name" value="MazG-like"/>
    <property type="match status" value="1"/>
</dbReference>
<dbReference type="HAMAP" id="MF_01020">
    <property type="entry name" value="HisE"/>
    <property type="match status" value="1"/>
</dbReference>
<dbReference type="InterPro" id="IPR008179">
    <property type="entry name" value="HisE"/>
</dbReference>
<dbReference type="InterPro" id="IPR021130">
    <property type="entry name" value="PRib-ATP_PPHydrolase-like"/>
</dbReference>
<dbReference type="NCBIfam" id="TIGR03188">
    <property type="entry name" value="histidine_hisI"/>
    <property type="match status" value="1"/>
</dbReference>
<dbReference type="NCBIfam" id="NF001610">
    <property type="entry name" value="PRK00400.1-1"/>
    <property type="match status" value="1"/>
</dbReference>
<dbReference type="PANTHER" id="PTHR42945">
    <property type="entry name" value="HISTIDINE BIOSYNTHESIS BIFUNCTIONAL PROTEIN"/>
    <property type="match status" value="1"/>
</dbReference>
<dbReference type="PANTHER" id="PTHR42945:SF1">
    <property type="entry name" value="HISTIDINE BIOSYNTHESIS BIFUNCTIONAL PROTEIN HIS7"/>
    <property type="match status" value="1"/>
</dbReference>
<dbReference type="Pfam" id="PF01503">
    <property type="entry name" value="PRA-PH"/>
    <property type="match status" value="1"/>
</dbReference>
<dbReference type="SUPFAM" id="SSF101386">
    <property type="entry name" value="all-alpha NTP pyrophosphatases"/>
    <property type="match status" value="1"/>
</dbReference>
<proteinExistence type="inferred from homology"/>
<sequence>MQQSLAVKTFEDLFAELGDRARTRPADSTTVAALDGGVHALGKKLLEEAGEVWLAAEHESNDALAEEISQLLYWTQVLMISRGLSLDDVYRKL</sequence>